<feature type="chain" id="PRO_0000189087" description="1-deoxy-D-xylulose-5-phosphate synthase">
    <location>
        <begin position="1"/>
        <end position="647"/>
    </location>
</feature>
<feature type="binding site" evidence="1">
    <location>
        <position position="79"/>
    </location>
    <ligand>
        <name>thiamine diphosphate</name>
        <dbReference type="ChEBI" id="CHEBI:58937"/>
    </ligand>
</feature>
<feature type="binding site" evidence="1">
    <location>
        <begin position="120"/>
        <end position="122"/>
    </location>
    <ligand>
        <name>thiamine diphosphate</name>
        <dbReference type="ChEBI" id="CHEBI:58937"/>
    </ligand>
</feature>
<feature type="binding site" evidence="1">
    <location>
        <position position="152"/>
    </location>
    <ligand>
        <name>Mg(2+)</name>
        <dbReference type="ChEBI" id="CHEBI:18420"/>
    </ligand>
</feature>
<feature type="binding site" evidence="1">
    <location>
        <begin position="153"/>
        <end position="154"/>
    </location>
    <ligand>
        <name>thiamine diphosphate</name>
        <dbReference type="ChEBI" id="CHEBI:58937"/>
    </ligand>
</feature>
<feature type="binding site" evidence="1">
    <location>
        <position position="181"/>
    </location>
    <ligand>
        <name>Mg(2+)</name>
        <dbReference type="ChEBI" id="CHEBI:18420"/>
    </ligand>
</feature>
<feature type="binding site" evidence="1">
    <location>
        <position position="181"/>
    </location>
    <ligand>
        <name>thiamine diphosphate</name>
        <dbReference type="ChEBI" id="CHEBI:58937"/>
    </ligand>
</feature>
<feature type="binding site" evidence="1">
    <location>
        <position position="293"/>
    </location>
    <ligand>
        <name>thiamine diphosphate</name>
        <dbReference type="ChEBI" id="CHEBI:58937"/>
    </ligand>
</feature>
<feature type="binding site" evidence="1">
    <location>
        <position position="377"/>
    </location>
    <ligand>
        <name>thiamine diphosphate</name>
        <dbReference type="ChEBI" id="CHEBI:58937"/>
    </ligand>
</feature>
<protein>
    <recommendedName>
        <fullName evidence="1">1-deoxy-D-xylulose-5-phosphate synthase</fullName>
        <ecNumber evidence="1">2.2.1.7</ecNumber>
    </recommendedName>
    <alternativeName>
        <fullName evidence="1">1-deoxyxylulose-5-phosphate synthase</fullName>
        <shortName evidence="1">DXP synthase</shortName>
        <shortName evidence="1">DXPS</shortName>
    </alternativeName>
</protein>
<reference key="1">
    <citation type="journal article" date="2003" name="Science">
        <title>A genomic view of the human-Bacteroides thetaiotaomicron symbiosis.</title>
        <authorList>
            <person name="Xu J."/>
            <person name="Bjursell M.K."/>
            <person name="Himrod J."/>
            <person name="Deng S."/>
            <person name="Carmichael L.K."/>
            <person name="Chiang H.C."/>
            <person name="Hooper L.V."/>
            <person name="Gordon J.I."/>
        </authorList>
    </citation>
    <scope>NUCLEOTIDE SEQUENCE [LARGE SCALE GENOMIC DNA]</scope>
    <source>
        <strain>ATCC 29148 / DSM 2079 / JCM 5827 / CCUG 10774 / NCTC 10582 / VPI-5482 / E50</strain>
    </source>
</reference>
<organism>
    <name type="scientific">Bacteroides thetaiotaomicron (strain ATCC 29148 / DSM 2079 / JCM 5827 / CCUG 10774 / NCTC 10582 / VPI-5482 / E50)</name>
    <dbReference type="NCBI Taxonomy" id="226186"/>
    <lineage>
        <taxon>Bacteria</taxon>
        <taxon>Pseudomonadati</taxon>
        <taxon>Bacteroidota</taxon>
        <taxon>Bacteroidia</taxon>
        <taxon>Bacteroidales</taxon>
        <taxon>Bacteroidaceae</taxon>
        <taxon>Bacteroides</taxon>
    </lineage>
</organism>
<sequence length="647" mass="71645">MKNEPIYNLLNSINSPDDLRRLEVDQLPEVCDELRQDIIKELSCNPGHFAASLGTVELTVALHYVYNTPYDRIVWDVGHQAYGHKILTGRREAFSTNRKLGGIRPFPSPEESEYDTFTCGHASNSISAALGMAVAAAKKGDDQRHVIAIIGDGSMSGGLAFEGLNNSSTTPNNLLIILNDNDMAIDRSVGGMKQYLFNLTTSNRYNQLRFKASRLLFKLGILNDERRKALIRFGNSLKSMAAQQQNIFEGMNIRYFGPIDGHDIKNLSRVLRDIKDLKGPKILHLHTIKGKGFAPAEKHATEWHAPGKFDPVTGERFVANTEGMPPLFQDVFGNTLVELAEANPRIVGVTPAMPSGCSMNILMSKMPKRAFDVGIAEGHAVTFSGGMAKDGLQPFCNIYSSFMQRAYDNIIHDVAIQNLPVVLCLDRAGLVGEDGPTHHGAFDMAYLRPIPNLTIASPMNEHELRRLMYTAQLPDKGPFVLRYPRGRGVLVDWKCPLEEIPVGKGRKLKDGKDIAVISIGPIGNKARSAIARAESESGRSIAHYDLRFLKPLDEELLHEVGRTFRHIVTIEDGTIQGGMGSAVLEFMADHEYTPTVKRIGIPDKFVQHGTVAELYQLCGMDEDSLTKELLKQCELLPDMSKIKELTN</sequence>
<comment type="function">
    <text evidence="1">Catalyzes the acyloin condensation reaction between C atoms 2 and 3 of pyruvate and glyceraldehyde 3-phosphate to yield 1-deoxy-D-xylulose-5-phosphate (DXP).</text>
</comment>
<comment type="catalytic activity">
    <reaction evidence="1">
        <text>D-glyceraldehyde 3-phosphate + pyruvate + H(+) = 1-deoxy-D-xylulose 5-phosphate + CO2</text>
        <dbReference type="Rhea" id="RHEA:12605"/>
        <dbReference type="ChEBI" id="CHEBI:15361"/>
        <dbReference type="ChEBI" id="CHEBI:15378"/>
        <dbReference type="ChEBI" id="CHEBI:16526"/>
        <dbReference type="ChEBI" id="CHEBI:57792"/>
        <dbReference type="ChEBI" id="CHEBI:59776"/>
        <dbReference type="EC" id="2.2.1.7"/>
    </reaction>
</comment>
<comment type="cofactor">
    <cofactor evidence="1">
        <name>Mg(2+)</name>
        <dbReference type="ChEBI" id="CHEBI:18420"/>
    </cofactor>
    <text evidence="1">Binds 1 Mg(2+) ion per subunit.</text>
</comment>
<comment type="cofactor">
    <cofactor evidence="1">
        <name>thiamine diphosphate</name>
        <dbReference type="ChEBI" id="CHEBI:58937"/>
    </cofactor>
    <text evidence="1">Binds 1 thiamine pyrophosphate per subunit.</text>
</comment>
<comment type="pathway">
    <text evidence="1">Metabolic intermediate biosynthesis; 1-deoxy-D-xylulose 5-phosphate biosynthesis; 1-deoxy-D-xylulose 5-phosphate from D-glyceraldehyde 3-phosphate and pyruvate: step 1/1.</text>
</comment>
<comment type="subunit">
    <text evidence="1">Homodimer.</text>
</comment>
<comment type="similarity">
    <text evidence="1">Belongs to the transketolase family. DXPS subfamily.</text>
</comment>
<evidence type="ECO:0000255" key="1">
    <source>
        <dbReference type="HAMAP-Rule" id="MF_00315"/>
    </source>
</evidence>
<keyword id="KW-0414">Isoprene biosynthesis</keyword>
<keyword id="KW-0460">Magnesium</keyword>
<keyword id="KW-0479">Metal-binding</keyword>
<keyword id="KW-1185">Reference proteome</keyword>
<keyword id="KW-0784">Thiamine biosynthesis</keyword>
<keyword id="KW-0786">Thiamine pyrophosphate</keyword>
<keyword id="KW-0808">Transferase</keyword>
<accession>Q8A0C2</accession>
<dbReference type="EC" id="2.2.1.7" evidence="1"/>
<dbReference type="EMBL" id="AE015928">
    <property type="protein sequence ID" value="AAO79204.1"/>
    <property type="molecule type" value="Genomic_DNA"/>
</dbReference>
<dbReference type="RefSeq" id="NP_813010.1">
    <property type="nucleotide sequence ID" value="NC_004663.1"/>
</dbReference>
<dbReference type="RefSeq" id="WP_008764325.1">
    <property type="nucleotide sequence ID" value="NZ_UYXG01000005.1"/>
</dbReference>
<dbReference type="SMR" id="Q8A0C2"/>
<dbReference type="FunCoup" id="Q8A0C2">
    <property type="interactions" value="462"/>
</dbReference>
<dbReference type="STRING" id="226186.BT_4099"/>
<dbReference type="PaxDb" id="226186-BT_4099"/>
<dbReference type="EnsemblBacteria" id="AAO79204">
    <property type="protein sequence ID" value="AAO79204"/>
    <property type="gene ID" value="BT_4099"/>
</dbReference>
<dbReference type="GeneID" id="60925274"/>
<dbReference type="KEGG" id="bth:BT_4099"/>
<dbReference type="PATRIC" id="fig|226186.12.peg.4164"/>
<dbReference type="eggNOG" id="COG1154">
    <property type="taxonomic scope" value="Bacteria"/>
</dbReference>
<dbReference type="HOGENOM" id="CLU_009227_1_4_10"/>
<dbReference type="InParanoid" id="Q8A0C2"/>
<dbReference type="OrthoDB" id="9803371at2"/>
<dbReference type="UniPathway" id="UPA00064">
    <property type="reaction ID" value="UER00091"/>
</dbReference>
<dbReference type="Proteomes" id="UP000001414">
    <property type="component" value="Chromosome"/>
</dbReference>
<dbReference type="GO" id="GO:0005829">
    <property type="term" value="C:cytosol"/>
    <property type="evidence" value="ECO:0000318"/>
    <property type="project" value="GO_Central"/>
</dbReference>
<dbReference type="GO" id="GO:0008661">
    <property type="term" value="F:1-deoxy-D-xylulose-5-phosphate synthase activity"/>
    <property type="evidence" value="ECO:0000318"/>
    <property type="project" value="GO_Central"/>
</dbReference>
<dbReference type="GO" id="GO:0000287">
    <property type="term" value="F:magnesium ion binding"/>
    <property type="evidence" value="ECO:0007669"/>
    <property type="project" value="UniProtKB-UniRule"/>
</dbReference>
<dbReference type="GO" id="GO:0030976">
    <property type="term" value="F:thiamine pyrophosphate binding"/>
    <property type="evidence" value="ECO:0007669"/>
    <property type="project" value="UniProtKB-UniRule"/>
</dbReference>
<dbReference type="GO" id="GO:0052865">
    <property type="term" value="P:1-deoxy-D-xylulose 5-phosphate biosynthetic process"/>
    <property type="evidence" value="ECO:0007669"/>
    <property type="project" value="UniProtKB-UniPathway"/>
</dbReference>
<dbReference type="GO" id="GO:0019288">
    <property type="term" value="P:isopentenyl diphosphate biosynthetic process, methylerythritol 4-phosphate pathway"/>
    <property type="evidence" value="ECO:0000318"/>
    <property type="project" value="GO_Central"/>
</dbReference>
<dbReference type="GO" id="GO:0016114">
    <property type="term" value="P:terpenoid biosynthetic process"/>
    <property type="evidence" value="ECO:0007669"/>
    <property type="project" value="UniProtKB-UniRule"/>
</dbReference>
<dbReference type="GO" id="GO:0009228">
    <property type="term" value="P:thiamine biosynthetic process"/>
    <property type="evidence" value="ECO:0007669"/>
    <property type="project" value="UniProtKB-UniRule"/>
</dbReference>
<dbReference type="CDD" id="cd02007">
    <property type="entry name" value="TPP_DXS"/>
    <property type="match status" value="1"/>
</dbReference>
<dbReference type="CDD" id="cd07033">
    <property type="entry name" value="TPP_PYR_DXS_TK_like"/>
    <property type="match status" value="1"/>
</dbReference>
<dbReference type="FunFam" id="3.40.50.920:FF:000002">
    <property type="entry name" value="1-deoxy-D-xylulose-5-phosphate synthase"/>
    <property type="match status" value="1"/>
</dbReference>
<dbReference type="FunFam" id="3.40.50.970:FF:000005">
    <property type="entry name" value="1-deoxy-D-xylulose-5-phosphate synthase"/>
    <property type="match status" value="1"/>
</dbReference>
<dbReference type="Gene3D" id="3.40.50.920">
    <property type="match status" value="1"/>
</dbReference>
<dbReference type="Gene3D" id="3.40.50.970">
    <property type="match status" value="2"/>
</dbReference>
<dbReference type="HAMAP" id="MF_00315">
    <property type="entry name" value="DXP_synth"/>
    <property type="match status" value="1"/>
</dbReference>
<dbReference type="InterPro" id="IPR005477">
    <property type="entry name" value="Dxylulose-5-P_synthase"/>
</dbReference>
<dbReference type="InterPro" id="IPR029061">
    <property type="entry name" value="THDP-binding"/>
</dbReference>
<dbReference type="InterPro" id="IPR009014">
    <property type="entry name" value="Transketo_C/PFOR_II"/>
</dbReference>
<dbReference type="InterPro" id="IPR005475">
    <property type="entry name" value="Transketolase-like_Pyr-bd"/>
</dbReference>
<dbReference type="InterPro" id="IPR020826">
    <property type="entry name" value="Transketolase_BS"/>
</dbReference>
<dbReference type="InterPro" id="IPR033248">
    <property type="entry name" value="Transketolase_C"/>
</dbReference>
<dbReference type="NCBIfam" id="TIGR00204">
    <property type="entry name" value="dxs"/>
    <property type="match status" value="1"/>
</dbReference>
<dbReference type="NCBIfam" id="NF003933">
    <property type="entry name" value="PRK05444.2-2"/>
    <property type="match status" value="1"/>
</dbReference>
<dbReference type="PANTHER" id="PTHR43322">
    <property type="entry name" value="1-D-DEOXYXYLULOSE 5-PHOSPHATE SYNTHASE-RELATED"/>
    <property type="match status" value="1"/>
</dbReference>
<dbReference type="PANTHER" id="PTHR43322:SF5">
    <property type="entry name" value="1-DEOXY-D-XYLULOSE-5-PHOSPHATE SYNTHASE, CHLOROPLASTIC"/>
    <property type="match status" value="1"/>
</dbReference>
<dbReference type="Pfam" id="PF13292">
    <property type="entry name" value="DXP_synthase_N"/>
    <property type="match status" value="1"/>
</dbReference>
<dbReference type="Pfam" id="PF02779">
    <property type="entry name" value="Transket_pyr"/>
    <property type="match status" value="1"/>
</dbReference>
<dbReference type="Pfam" id="PF02780">
    <property type="entry name" value="Transketolase_C"/>
    <property type="match status" value="1"/>
</dbReference>
<dbReference type="SMART" id="SM00861">
    <property type="entry name" value="Transket_pyr"/>
    <property type="match status" value="1"/>
</dbReference>
<dbReference type="SUPFAM" id="SSF52518">
    <property type="entry name" value="Thiamin diphosphate-binding fold (THDP-binding)"/>
    <property type="match status" value="2"/>
</dbReference>
<dbReference type="SUPFAM" id="SSF52922">
    <property type="entry name" value="TK C-terminal domain-like"/>
    <property type="match status" value="1"/>
</dbReference>
<dbReference type="PROSITE" id="PS00802">
    <property type="entry name" value="TRANSKETOLASE_2"/>
    <property type="match status" value="1"/>
</dbReference>
<proteinExistence type="inferred from homology"/>
<gene>
    <name evidence="1" type="primary">dxs</name>
    <name type="ordered locus">BT_4099</name>
</gene>
<name>DXS_BACTN</name>